<name>SYFA_RHIWR</name>
<dbReference type="EC" id="6.1.1.20" evidence="1"/>
<dbReference type="EMBL" id="CP000699">
    <property type="protein sequence ID" value="ABQ68788.1"/>
    <property type="molecule type" value="Genomic_DNA"/>
</dbReference>
<dbReference type="SMR" id="A5V922"/>
<dbReference type="STRING" id="392499.Swit_2429"/>
<dbReference type="PaxDb" id="392499-Swit_2429"/>
<dbReference type="KEGG" id="swi:Swit_2429"/>
<dbReference type="eggNOG" id="COG0016">
    <property type="taxonomic scope" value="Bacteria"/>
</dbReference>
<dbReference type="HOGENOM" id="CLU_025086_0_1_5"/>
<dbReference type="OrthoDB" id="9800719at2"/>
<dbReference type="Proteomes" id="UP000001989">
    <property type="component" value="Chromosome"/>
</dbReference>
<dbReference type="GO" id="GO:0005737">
    <property type="term" value="C:cytoplasm"/>
    <property type="evidence" value="ECO:0007669"/>
    <property type="project" value="UniProtKB-SubCell"/>
</dbReference>
<dbReference type="GO" id="GO:0005524">
    <property type="term" value="F:ATP binding"/>
    <property type="evidence" value="ECO:0007669"/>
    <property type="project" value="UniProtKB-UniRule"/>
</dbReference>
<dbReference type="GO" id="GO:0000287">
    <property type="term" value="F:magnesium ion binding"/>
    <property type="evidence" value="ECO:0007669"/>
    <property type="project" value="UniProtKB-UniRule"/>
</dbReference>
<dbReference type="GO" id="GO:0004826">
    <property type="term" value="F:phenylalanine-tRNA ligase activity"/>
    <property type="evidence" value="ECO:0007669"/>
    <property type="project" value="UniProtKB-UniRule"/>
</dbReference>
<dbReference type="GO" id="GO:0000049">
    <property type="term" value="F:tRNA binding"/>
    <property type="evidence" value="ECO:0007669"/>
    <property type="project" value="InterPro"/>
</dbReference>
<dbReference type="GO" id="GO:0006432">
    <property type="term" value="P:phenylalanyl-tRNA aminoacylation"/>
    <property type="evidence" value="ECO:0007669"/>
    <property type="project" value="UniProtKB-UniRule"/>
</dbReference>
<dbReference type="CDD" id="cd00496">
    <property type="entry name" value="PheRS_alpha_core"/>
    <property type="match status" value="1"/>
</dbReference>
<dbReference type="FunFam" id="3.30.930.10:FF:000003">
    <property type="entry name" value="Phenylalanine--tRNA ligase alpha subunit"/>
    <property type="match status" value="1"/>
</dbReference>
<dbReference type="Gene3D" id="3.30.930.10">
    <property type="entry name" value="Bira Bifunctional Protein, Domain 2"/>
    <property type="match status" value="1"/>
</dbReference>
<dbReference type="HAMAP" id="MF_00281">
    <property type="entry name" value="Phe_tRNA_synth_alpha1"/>
    <property type="match status" value="1"/>
</dbReference>
<dbReference type="InterPro" id="IPR006195">
    <property type="entry name" value="aa-tRNA-synth_II"/>
</dbReference>
<dbReference type="InterPro" id="IPR045864">
    <property type="entry name" value="aa-tRNA-synth_II/BPL/LPL"/>
</dbReference>
<dbReference type="InterPro" id="IPR004529">
    <property type="entry name" value="Phe-tRNA-synth_IIc_asu"/>
</dbReference>
<dbReference type="InterPro" id="IPR004188">
    <property type="entry name" value="Phe-tRNA_ligase_II_N"/>
</dbReference>
<dbReference type="InterPro" id="IPR022911">
    <property type="entry name" value="Phe_tRNA_ligase_alpha1_bac"/>
</dbReference>
<dbReference type="InterPro" id="IPR002319">
    <property type="entry name" value="Phenylalanyl-tRNA_Synthase"/>
</dbReference>
<dbReference type="InterPro" id="IPR010978">
    <property type="entry name" value="tRNA-bd_arm"/>
</dbReference>
<dbReference type="NCBIfam" id="TIGR00468">
    <property type="entry name" value="pheS"/>
    <property type="match status" value="1"/>
</dbReference>
<dbReference type="PANTHER" id="PTHR11538:SF41">
    <property type="entry name" value="PHENYLALANINE--TRNA LIGASE, MITOCHONDRIAL"/>
    <property type="match status" value="1"/>
</dbReference>
<dbReference type="PANTHER" id="PTHR11538">
    <property type="entry name" value="PHENYLALANYL-TRNA SYNTHETASE"/>
    <property type="match status" value="1"/>
</dbReference>
<dbReference type="Pfam" id="PF02912">
    <property type="entry name" value="Phe_tRNA-synt_N"/>
    <property type="match status" value="1"/>
</dbReference>
<dbReference type="Pfam" id="PF01409">
    <property type="entry name" value="tRNA-synt_2d"/>
    <property type="match status" value="1"/>
</dbReference>
<dbReference type="SUPFAM" id="SSF55681">
    <property type="entry name" value="Class II aaRS and biotin synthetases"/>
    <property type="match status" value="1"/>
</dbReference>
<dbReference type="SUPFAM" id="SSF46589">
    <property type="entry name" value="tRNA-binding arm"/>
    <property type="match status" value="1"/>
</dbReference>
<dbReference type="PROSITE" id="PS50862">
    <property type="entry name" value="AA_TRNA_LIGASE_II"/>
    <property type="match status" value="1"/>
</dbReference>
<accession>A5V922</accession>
<organism>
    <name type="scientific">Rhizorhabdus wittichii (strain DSM 6014 / CCUG 31198 / JCM 15750 / NBRC 105917 / EY 4224 / RW1)</name>
    <name type="common">Sphingomonas wittichii</name>
    <dbReference type="NCBI Taxonomy" id="392499"/>
    <lineage>
        <taxon>Bacteria</taxon>
        <taxon>Pseudomonadati</taxon>
        <taxon>Pseudomonadota</taxon>
        <taxon>Alphaproteobacteria</taxon>
        <taxon>Sphingomonadales</taxon>
        <taxon>Sphingomonadaceae</taxon>
        <taxon>Rhizorhabdus</taxon>
    </lineage>
</organism>
<keyword id="KW-0030">Aminoacyl-tRNA synthetase</keyword>
<keyword id="KW-0067">ATP-binding</keyword>
<keyword id="KW-0963">Cytoplasm</keyword>
<keyword id="KW-0436">Ligase</keyword>
<keyword id="KW-0460">Magnesium</keyword>
<keyword id="KW-0479">Metal-binding</keyword>
<keyword id="KW-0547">Nucleotide-binding</keyword>
<keyword id="KW-0648">Protein biosynthesis</keyword>
<keyword id="KW-1185">Reference proteome</keyword>
<feature type="chain" id="PRO_1000006904" description="Phenylalanine--tRNA ligase alpha subunit">
    <location>
        <begin position="1"/>
        <end position="360"/>
    </location>
</feature>
<feature type="binding site" evidence="1">
    <location>
        <position position="255"/>
    </location>
    <ligand>
        <name>Mg(2+)</name>
        <dbReference type="ChEBI" id="CHEBI:18420"/>
        <note>shared with beta subunit</note>
    </ligand>
</feature>
<protein>
    <recommendedName>
        <fullName evidence="1">Phenylalanine--tRNA ligase alpha subunit</fullName>
        <ecNumber evidence="1">6.1.1.20</ecNumber>
    </recommendedName>
    <alternativeName>
        <fullName evidence="1">Phenylalanyl-tRNA synthetase alpha subunit</fullName>
        <shortName evidence="1">PheRS</shortName>
    </alternativeName>
</protein>
<sequence>MTTENQDALSEIASAATLADLEAIRVRTLGKSGTITALLKTLGAMTPDQRQAEGPKIHALREAVTAAIADRKASLEGAALEARLATETLDMSLPVSAGMQGSVHPVAQVMDELAEIFADLGFAVATGPEIEDDWHNFTALNIPETHPARAMHDTFYFPDREDGKKMLLRTHTSPVQIRTMMTEKPPIRIIAPGRTYRSDSDATHTPMFHQVEGLVIDRGIHMGHLKWTLETFVKAFFERDDIVLRLRPSFFPFTEPSAEVDVGFTWEKGRRVIGGDPAAGNGGWMEILGSGMVHPRVIANCGLDPDEWQGFAFGCGIDRLAMLKYGMDDLRAFFDGDLRWLRHYGFAALDVPTLSGGVGA</sequence>
<reference key="1">
    <citation type="journal article" date="2010" name="J. Bacteriol.">
        <title>Genome sequence of the dioxin-mineralizing bacterium Sphingomonas wittichii RW1.</title>
        <authorList>
            <person name="Miller T.R."/>
            <person name="Delcher A.L."/>
            <person name="Salzberg S.L."/>
            <person name="Saunders E."/>
            <person name="Detter J.C."/>
            <person name="Halden R.U."/>
        </authorList>
    </citation>
    <scope>NUCLEOTIDE SEQUENCE [LARGE SCALE GENOMIC DNA]</scope>
    <source>
        <strain>DSM 6014 / CCUG 31198 / JCM 15750 / NBRC 105917 / EY 4224 / RW1</strain>
    </source>
</reference>
<gene>
    <name evidence="1" type="primary">pheS</name>
    <name type="ordered locus">Swit_2429</name>
</gene>
<comment type="catalytic activity">
    <reaction evidence="1">
        <text>tRNA(Phe) + L-phenylalanine + ATP = L-phenylalanyl-tRNA(Phe) + AMP + diphosphate + H(+)</text>
        <dbReference type="Rhea" id="RHEA:19413"/>
        <dbReference type="Rhea" id="RHEA-COMP:9668"/>
        <dbReference type="Rhea" id="RHEA-COMP:9699"/>
        <dbReference type="ChEBI" id="CHEBI:15378"/>
        <dbReference type="ChEBI" id="CHEBI:30616"/>
        <dbReference type="ChEBI" id="CHEBI:33019"/>
        <dbReference type="ChEBI" id="CHEBI:58095"/>
        <dbReference type="ChEBI" id="CHEBI:78442"/>
        <dbReference type="ChEBI" id="CHEBI:78531"/>
        <dbReference type="ChEBI" id="CHEBI:456215"/>
        <dbReference type="EC" id="6.1.1.20"/>
    </reaction>
</comment>
<comment type="cofactor">
    <cofactor evidence="1">
        <name>Mg(2+)</name>
        <dbReference type="ChEBI" id="CHEBI:18420"/>
    </cofactor>
    <text evidence="1">Binds 2 magnesium ions per tetramer.</text>
</comment>
<comment type="subunit">
    <text evidence="1">Tetramer of two alpha and two beta subunits.</text>
</comment>
<comment type="subcellular location">
    <subcellularLocation>
        <location evidence="1">Cytoplasm</location>
    </subcellularLocation>
</comment>
<comment type="similarity">
    <text evidence="1">Belongs to the class-II aminoacyl-tRNA synthetase family. Phe-tRNA synthetase alpha subunit type 1 subfamily.</text>
</comment>
<proteinExistence type="inferred from homology"/>
<evidence type="ECO:0000255" key="1">
    <source>
        <dbReference type="HAMAP-Rule" id="MF_00281"/>
    </source>
</evidence>